<sequence>MKKIVLAGGCFWGVEEFLSRINGVVSTEVGYANGRTENPTYEDICTKNTYFAEVCLVNYDENIISLKELLAKFWTIIDPTSLNKQGNDVGSQYRTGIYYVEPSDLEEILNSKEELQKSYSKKIVTEVKPLENYYKAEEYHQKYLKKNPNGYCHIKLD</sequence>
<evidence type="ECO:0000255" key="1">
    <source>
        <dbReference type="HAMAP-Rule" id="MF_01401"/>
    </source>
</evidence>
<accession>Q0SPW9</accession>
<organism>
    <name type="scientific">Clostridium perfringens (strain SM101 / Type A)</name>
    <dbReference type="NCBI Taxonomy" id="289380"/>
    <lineage>
        <taxon>Bacteria</taxon>
        <taxon>Bacillati</taxon>
        <taxon>Bacillota</taxon>
        <taxon>Clostridia</taxon>
        <taxon>Eubacteriales</taxon>
        <taxon>Clostridiaceae</taxon>
        <taxon>Clostridium</taxon>
    </lineage>
</organism>
<name>MSRA_CLOPS</name>
<reference key="1">
    <citation type="journal article" date="2006" name="Genome Res.">
        <title>Skewed genomic variability in strains of the toxigenic bacterial pathogen, Clostridium perfringens.</title>
        <authorList>
            <person name="Myers G.S.A."/>
            <person name="Rasko D.A."/>
            <person name="Cheung J.K."/>
            <person name="Ravel J."/>
            <person name="Seshadri R."/>
            <person name="DeBoy R.T."/>
            <person name="Ren Q."/>
            <person name="Varga J."/>
            <person name="Awad M.M."/>
            <person name="Brinkac L.M."/>
            <person name="Daugherty S.C."/>
            <person name="Haft D.H."/>
            <person name="Dodson R.J."/>
            <person name="Madupu R."/>
            <person name="Nelson W.C."/>
            <person name="Rosovitz M.J."/>
            <person name="Sullivan S.A."/>
            <person name="Khouri H."/>
            <person name="Dimitrov G.I."/>
            <person name="Watkins K.L."/>
            <person name="Mulligan S."/>
            <person name="Benton J."/>
            <person name="Radune D."/>
            <person name="Fisher D.J."/>
            <person name="Atkins H.S."/>
            <person name="Hiscox T."/>
            <person name="Jost B.H."/>
            <person name="Billington S.J."/>
            <person name="Songer J.G."/>
            <person name="McClane B.A."/>
            <person name="Titball R.W."/>
            <person name="Rood J.I."/>
            <person name="Melville S.B."/>
            <person name="Paulsen I.T."/>
        </authorList>
    </citation>
    <scope>NUCLEOTIDE SEQUENCE [LARGE SCALE GENOMIC DNA]</scope>
    <source>
        <strain>SM101 / Type A</strain>
    </source>
</reference>
<dbReference type="EC" id="1.8.4.11" evidence="1"/>
<dbReference type="EMBL" id="CP000312">
    <property type="protein sequence ID" value="ABG86656.1"/>
    <property type="molecule type" value="Genomic_DNA"/>
</dbReference>
<dbReference type="RefSeq" id="WP_011593267.1">
    <property type="nucleotide sequence ID" value="NC_008262.1"/>
</dbReference>
<dbReference type="SMR" id="Q0SPW9"/>
<dbReference type="KEGG" id="cpr:CPR_2591"/>
<dbReference type="Proteomes" id="UP000001824">
    <property type="component" value="Chromosome"/>
</dbReference>
<dbReference type="GO" id="GO:0005737">
    <property type="term" value="C:cytoplasm"/>
    <property type="evidence" value="ECO:0007669"/>
    <property type="project" value="TreeGrafter"/>
</dbReference>
<dbReference type="GO" id="GO:0036456">
    <property type="term" value="F:L-methionine-(S)-S-oxide reductase activity"/>
    <property type="evidence" value="ECO:0007669"/>
    <property type="project" value="TreeGrafter"/>
</dbReference>
<dbReference type="GO" id="GO:0008113">
    <property type="term" value="F:peptide-methionine (S)-S-oxide reductase activity"/>
    <property type="evidence" value="ECO:0007669"/>
    <property type="project" value="UniProtKB-UniRule"/>
</dbReference>
<dbReference type="GO" id="GO:0034599">
    <property type="term" value="P:cellular response to oxidative stress"/>
    <property type="evidence" value="ECO:0007669"/>
    <property type="project" value="TreeGrafter"/>
</dbReference>
<dbReference type="GO" id="GO:0036211">
    <property type="term" value="P:protein modification process"/>
    <property type="evidence" value="ECO:0007669"/>
    <property type="project" value="UniProtKB-UniRule"/>
</dbReference>
<dbReference type="Gene3D" id="3.30.1060.10">
    <property type="entry name" value="Peptide methionine sulphoxide reductase MsrA"/>
    <property type="match status" value="1"/>
</dbReference>
<dbReference type="HAMAP" id="MF_01401">
    <property type="entry name" value="MsrA"/>
    <property type="match status" value="1"/>
</dbReference>
<dbReference type="InterPro" id="IPR002569">
    <property type="entry name" value="Met_Sox_Rdtase_MsrA_dom"/>
</dbReference>
<dbReference type="InterPro" id="IPR036509">
    <property type="entry name" value="Met_Sox_Rdtase_MsrA_sf"/>
</dbReference>
<dbReference type="InterPro" id="IPR050162">
    <property type="entry name" value="MsrA_MetSO_reductase"/>
</dbReference>
<dbReference type="NCBIfam" id="TIGR00401">
    <property type="entry name" value="msrA"/>
    <property type="match status" value="1"/>
</dbReference>
<dbReference type="PANTHER" id="PTHR42799">
    <property type="entry name" value="MITOCHONDRIAL PEPTIDE METHIONINE SULFOXIDE REDUCTASE"/>
    <property type="match status" value="1"/>
</dbReference>
<dbReference type="PANTHER" id="PTHR42799:SF2">
    <property type="entry name" value="MITOCHONDRIAL PEPTIDE METHIONINE SULFOXIDE REDUCTASE"/>
    <property type="match status" value="1"/>
</dbReference>
<dbReference type="Pfam" id="PF01625">
    <property type="entry name" value="PMSR"/>
    <property type="match status" value="1"/>
</dbReference>
<dbReference type="SUPFAM" id="SSF55068">
    <property type="entry name" value="Peptide methionine sulfoxide reductase"/>
    <property type="match status" value="1"/>
</dbReference>
<gene>
    <name evidence="1" type="primary">msrA</name>
    <name type="ordered locus">CPR_2591</name>
</gene>
<protein>
    <recommendedName>
        <fullName evidence="1">Peptide methionine sulfoxide reductase MsrA</fullName>
        <shortName evidence="1">Protein-methionine-S-oxide reductase</shortName>
        <ecNumber evidence="1">1.8.4.11</ecNumber>
    </recommendedName>
    <alternativeName>
        <fullName evidence="1">Peptide-methionine (S)-S-oxide reductase</fullName>
        <shortName evidence="1">Peptide Met(O) reductase</shortName>
    </alternativeName>
</protein>
<feature type="chain" id="PRO_1000068322" description="Peptide methionine sulfoxide reductase MsrA">
    <location>
        <begin position="1"/>
        <end position="157"/>
    </location>
</feature>
<feature type="active site" evidence="1">
    <location>
        <position position="10"/>
    </location>
</feature>
<comment type="function">
    <text evidence="1">Has an important function as a repair enzyme for proteins that have been inactivated by oxidation. Catalyzes the reversible oxidation-reduction of methionine sulfoxide in proteins to methionine.</text>
</comment>
<comment type="catalytic activity">
    <reaction evidence="1">
        <text>L-methionyl-[protein] + [thioredoxin]-disulfide + H2O = L-methionyl-(S)-S-oxide-[protein] + [thioredoxin]-dithiol</text>
        <dbReference type="Rhea" id="RHEA:14217"/>
        <dbReference type="Rhea" id="RHEA-COMP:10698"/>
        <dbReference type="Rhea" id="RHEA-COMP:10700"/>
        <dbReference type="Rhea" id="RHEA-COMP:12313"/>
        <dbReference type="Rhea" id="RHEA-COMP:12315"/>
        <dbReference type="ChEBI" id="CHEBI:15377"/>
        <dbReference type="ChEBI" id="CHEBI:16044"/>
        <dbReference type="ChEBI" id="CHEBI:29950"/>
        <dbReference type="ChEBI" id="CHEBI:44120"/>
        <dbReference type="ChEBI" id="CHEBI:50058"/>
        <dbReference type="EC" id="1.8.4.11"/>
    </reaction>
</comment>
<comment type="catalytic activity">
    <reaction evidence="1">
        <text>[thioredoxin]-disulfide + L-methionine + H2O = L-methionine (S)-S-oxide + [thioredoxin]-dithiol</text>
        <dbReference type="Rhea" id="RHEA:19993"/>
        <dbReference type="Rhea" id="RHEA-COMP:10698"/>
        <dbReference type="Rhea" id="RHEA-COMP:10700"/>
        <dbReference type="ChEBI" id="CHEBI:15377"/>
        <dbReference type="ChEBI" id="CHEBI:29950"/>
        <dbReference type="ChEBI" id="CHEBI:50058"/>
        <dbReference type="ChEBI" id="CHEBI:57844"/>
        <dbReference type="ChEBI" id="CHEBI:58772"/>
        <dbReference type="EC" id="1.8.4.11"/>
    </reaction>
</comment>
<comment type="similarity">
    <text evidence="1">Belongs to the MsrA Met sulfoxide reductase family.</text>
</comment>
<keyword id="KW-0560">Oxidoreductase</keyword>
<proteinExistence type="inferred from homology"/>